<gene>
    <name type="ORF">BCRF1</name>
</gene>
<comment type="function">
    <text evidence="1">Inhibits IFN-gamma synthesis. Down-regulates the expression of the host TAP1 gene (transporter associated with antigen processing), thereby affecting the transport of peptides into the endoplasmic reticulum and subsequent peptide loading by MHC class I molecules. In consequence, infected cells are masked for immune recognition by cytotoxic T-lymphocytes (By similarity).</text>
</comment>
<comment type="subunit">
    <text evidence="1">Homodimer.</text>
</comment>
<comment type="subcellular location">
    <subcellularLocation>
        <location evidence="3">Secreted</location>
    </subcellularLocation>
</comment>
<comment type="similarity">
    <text evidence="3">Belongs to the IL-10 family.</text>
</comment>
<comment type="caution">
    <text evidence="3">Be careful of the possible confusion between BCRF1 with BcRF1.</text>
</comment>
<organismHost>
    <name type="scientific">Homo sapiens</name>
    <name type="common">Human</name>
    <dbReference type="NCBI Taxonomy" id="9606"/>
</organismHost>
<feature type="signal peptide" evidence="2">
    <location>
        <begin position="1"/>
        <end position="23"/>
    </location>
</feature>
<feature type="chain" id="PRO_0000375956" description="Viral interleukin-10 homolog">
    <location>
        <begin position="24"/>
        <end position="170"/>
    </location>
</feature>
<feature type="coiled-coil region" evidence="2">
    <location>
        <begin position="97"/>
        <end position="145"/>
    </location>
</feature>
<feature type="glycosylation site" description="N-linked (GlcNAc...) asparagine; by host" evidence="2">
    <location>
        <position position="127"/>
    </location>
</feature>
<feature type="disulfide bond" evidence="1">
    <location>
        <begin position="27"/>
        <end position="119"/>
    </location>
</feature>
<feature type="disulfide bond" evidence="1">
    <location>
        <begin position="73"/>
        <end position="125"/>
    </location>
</feature>
<name>IL10H_EBVG</name>
<sequence>MERRLVVTLQCLVLLYLAPECGGTDQCDNFPQMLRDLRDAFSRVKTFFQTKDEVDNLLLKESLLEDFKGYLGCQALSEMIQFYLEEVMPQAENQDPEAKDHVNSLGENLKTLRLRLRRCHRFLPCENKSKAVEQIKNAFNKLQEKGIYKAMSEFDIFINYIEAYMTIKAR</sequence>
<evidence type="ECO:0000250" key="1"/>
<evidence type="ECO:0000255" key="2"/>
<evidence type="ECO:0000305" key="3"/>
<keyword id="KW-0175">Coiled coil</keyword>
<keyword id="KW-0202">Cytokine</keyword>
<keyword id="KW-1015">Disulfide bond</keyword>
<keyword id="KW-1125">Evasion of host immunity by viral interleukin-like protein</keyword>
<keyword id="KW-0325">Glycoprotein</keyword>
<keyword id="KW-0945">Host-virus interaction</keyword>
<keyword id="KW-0964">Secreted</keyword>
<keyword id="KW-0732">Signal</keyword>
<keyword id="KW-0899">Viral immunoevasion</keyword>
<reference key="1">
    <citation type="journal article" date="2005" name="J. Virol.">
        <title>Genomic sequence analysis of Epstein-Barr virus strain GD1 from a nasopharyngeal carcinoma patient.</title>
        <authorList>
            <person name="Zeng M.-S."/>
            <person name="Li D.-J."/>
            <person name="Liu Q.-L."/>
            <person name="Song L.-B."/>
            <person name="Li M.-Z."/>
            <person name="Zhang R.-H."/>
            <person name="Yu X.-J."/>
            <person name="Wang H.-M."/>
            <person name="Ernberg I."/>
            <person name="Zeng Y.-X."/>
        </authorList>
    </citation>
    <scope>NUCLEOTIDE SEQUENCE [LARGE SCALE GENOMIC DNA]</scope>
</reference>
<organism>
    <name type="scientific">Epstein-Barr virus (strain GD1)</name>
    <name type="common">HHV-4</name>
    <name type="synonym">Human gammaherpesvirus 4</name>
    <dbReference type="NCBI Taxonomy" id="10376"/>
    <lineage>
        <taxon>Viruses</taxon>
        <taxon>Duplodnaviria</taxon>
        <taxon>Heunggongvirae</taxon>
        <taxon>Peploviricota</taxon>
        <taxon>Herviviricetes</taxon>
        <taxon>Herpesvirales</taxon>
        <taxon>Orthoherpesviridae</taxon>
        <taxon>Gammaherpesvirinae</taxon>
        <taxon>Lymphocryptovirus</taxon>
        <taxon>Lymphocryptovirus humangamma4</taxon>
    </lineage>
</organism>
<protein>
    <recommendedName>
        <fullName>Viral interleukin-10 homolog</fullName>
        <shortName>vIL-10</shortName>
    </recommendedName>
    <alternativeName>
        <fullName>20 kDa protein</fullName>
    </alternativeName>
    <alternativeName>
        <fullName>Protein BCRF1</fullName>
    </alternativeName>
</protein>
<dbReference type="EMBL" id="AY961628">
    <property type="protein sequence ID" value="AAY41098.1"/>
    <property type="molecule type" value="Genomic_DNA"/>
</dbReference>
<dbReference type="RefSeq" id="YP_401634.1">
    <property type="nucleotide sequence ID" value="NC_007605.1"/>
</dbReference>
<dbReference type="SMR" id="P0CAP9"/>
<dbReference type="DNASU" id="3783689"/>
<dbReference type="GeneID" id="3783689"/>
<dbReference type="KEGG" id="vg:3783689"/>
<dbReference type="Proteomes" id="UP000007641">
    <property type="component" value="Genome"/>
</dbReference>
<dbReference type="GO" id="GO:0005615">
    <property type="term" value="C:extracellular space"/>
    <property type="evidence" value="ECO:0007669"/>
    <property type="project" value="UniProtKB-KW"/>
</dbReference>
<dbReference type="GO" id="GO:0005125">
    <property type="term" value="F:cytokine activity"/>
    <property type="evidence" value="ECO:0007669"/>
    <property type="project" value="UniProtKB-KW"/>
</dbReference>
<dbReference type="GO" id="GO:0006955">
    <property type="term" value="P:immune response"/>
    <property type="evidence" value="ECO:0007669"/>
    <property type="project" value="InterPro"/>
</dbReference>
<dbReference type="GO" id="GO:0001817">
    <property type="term" value="P:regulation of cytokine production"/>
    <property type="evidence" value="ECO:0007669"/>
    <property type="project" value="UniProtKB-ARBA"/>
</dbReference>
<dbReference type="FunFam" id="1.20.1250.10:FF:000011">
    <property type="entry name" value="Interleukin-10"/>
    <property type="match status" value="1"/>
</dbReference>
<dbReference type="Gene3D" id="1.20.1250.10">
    <property type="match status" value="1"/>
</dbReference>
<dbReference type="InterPro" id="IPR009079">
    <property type="entry name" value="4_helix_cytokine-like_core"/>
</dbReference>
<dbReference type="InterPro" id="IPR000098">
    <property type="entry name" value="IL-10"/>
</dbReference>
<dbReference type="InterPro" id="IPR020443">
    <property type="entry name" value="IL-10/19/20/24/26"/>
</dbReference>
<dbReference type="InterPro" id="IPR020423">
    <property type="entry name" value="IL-10_CS"/>
</dbReference>
<dbReference type="PANTHER" id="PTHR48482:SF5">
    <property type="entry name" value="INTERLEUKIN-10"/>
    <property type="match status" value="1"/>
</dbReference>
<dbReference type="PANTHER" id="PTHR48482">
    <property type="entry name" value="INTERLEUKIN-19-RELATED"/>
    <property type="match status" value="1"/>
</dbReference>
<dbReference type="Pfam" id="PF00726">
    <property type="entry name" value="IL10"/>
    <property type="match status" value="1"/>
</dbReference>
<dbReference type="PRINTS" id="PR01294">
    <property type="entry name" value="INTRLEUKIN10"/>
</dbReference>
<dbReference type="SMART" id="SM00188">
    <property type="entry name" value="IL10"/>
    <property type="match status" value="1"/>
</dbReference>
<dbReference type="SUPFAM" id="SSF47266">
    <property type="entry name" value="4-helical cytokines"/>
    <property type="match status" value="1"/>
</dbReference>
<dbReference type="PROSITE" id="PS00520">
    <property type="entry name" value="INTERLEUKIN_10"/>
    <property type="match status" value="1"/>
</dbReference>
<accession>P0CAP9</accession>
<accession>P0C6Z7</accession>
<accession>Q777H2</accession>
<proteinExistence type="inferred from homology"/>